<accession>Q3ARD7</accession>
<dbReference type="EC" id="6.1.1.6" evidence="1"/>
<dbReference type="EMBL" id="CP000108">
    <property type="protein sequence ID" value="ABB28438.1"/>
    <property type="molecule type" value="Genomic_DNA"/>
</dbReference>
<dbReference type="SMR" id="Q3ARD7"/>
<dbReference type="STRING" id="340177.Cag_1176"/>
<dbReference type="KEGG" id="cch:Cag_1176"/>
<dbReference type="eggNOG" id="COG1190">
    <property type="taxonomic scope" value="Bacteria"/>
</dbReference>
<dbReference type="HOGENOM" id="CLU_008255_6_0_10"/>
<dbReference type="OrthoDB" id="9801152at2"/>
<dbReference type="GO" id="GO:0005829">
    <property type="term" value="C:cytosol"/>
    <property type="evidence" value="ECO:0007669"/>
    <property type="project" value="TreeGrafter"/>
</dbReference>
<dbReference type="GO" id="GO:0005524">
    <property type="term" value="F:ATP binding"/>
    <property type="evidence" value="ECO:0007669"/>
    <property type="project" value="UniProtKB-UniRule"/>
</dbReference>
<dbReference type="GO" id="GO:0004824">
    <property type="term" value="F:lysine-tRNA ligase activity"/>
    <property type="evidence" value="ECO:0007669"/>
    <property type="project" value="UniProtKB-UniRule"/>
</dbReference>
<dbReference type="GO" id="GO:0000287">
    <property type="term" value="F:magnesium ion binding"/>
    <property type="evidence" value="ECO:0007669"/>
    <property type="project" value="UniProtKB-UniRule"/>
</dbReference>
<dbReference type="GO" id="GO:0000049">
    <property type="term" value="F:tRNA binding"/>
    <property type="evidence" value="ECO:0007669"/>
    <property type="project" value="TreeGrafter"/>
</dbReference>
<dbReference type="GO" id="GO:0006430">
    <property type="term" value="P:lysyl-tRNA aminoacylation"/>
    <property type="evidence" value="ECO:0007669"/>
    <property type="project" value="UniProtKB-UniRule"/>
</dbReference>
<dbReference type="CDD" id="cd00775">
    <property type="entry name" value="LysRS_core"/>
    <property type="match status" value="1"/>
</dbReference>
<dbReference type="CDD" id="cd04322">
    <property type="entry name" value="LysRS_N"/>
    <property type="match status" value="1"/>
</dbReference>
<dbReference type="FunFam" id="2.40.50.140:FF:000024">
    <property type="entry name" value="Lysine--tRNA ligase"/>
    <property type="match status" value="1"/>
</dbReference>
<dbReference type="Gene3D" id="3.30.930.10">
    <property type="entry name" value="Bira Bifunctional Protein, Domain 2"/>
    <property type="match status" value="1"/>
</dbReference>
<dbReference type="Gene3D" id="2.40.50.140">
    <property type="entry name" value="Nucleic acid-binding proteins"/>
    <property type="match status" value="1"/>
</dbReference>
<dbReference type="HAMAP" id="MF_00252">
    <property type="entry name" value="Lys_tRNA_synth_class2"/>
    <property type="match status" value="1"/>
</dbReference>
<dbReference type="InterPro" id="IPR004364">
    <property type="entry name" value="Aa-tRNA-synt_II"/>
</dbReference>
<dbReference type="InterPro" id="IPR006195">
    <property type="entry name" value="aa-tRNA-synth_II"/>
</dbReference>
<dbReference type="InterPro" id="IPR045864">
    <property type="entry name" value="aa-tRNA-synth_II/BPL/LPL"/>
</dbReference>
<dbReference type="InterPro" id="IPR002313">
    <property type="entry name" value="Lys-tRNA-ligase_II"/>
</dbReference>
<dbReference type="InterPro" id="IPR044136">
    <property type="entry name" value="Lys-tRNA-ligase_II_N"/>
</dbReference>
<dbReference type="InterPro" id="IPR018149">
    <property type="entry name" value="Lys-tRNA-synth_II_C"/>
</dbReference>
<dbReference type="InterPro" id="IPR012340">
    <property type="entry name" value="NA-bd_OB-fold"/>
</dbReference>
<dbReference type="InterPro" id="IPR004365">
    <property type="entry name" value="NA-bd_OB_tRNA"/>
</dbReference>
<dbReference type="NCBIfam" id="TIGR00499">
    <property type="entry name" value="lysS_bact"/>
    <property type="match status" value="1"/>
</dbReference>
<dbReference type="NCBIfam" id="NF001756">
    <property type="entry name" value="PRK00484.1"/>
    <property type="match status" value="1"/>
</dbReference>
<dbReference type="PANTHER" id="PTHR42918:SF15">
    <property type="entry name" value="LYSINE--TRNA LIGASE, CHLOROPLASTIC_MITOCHONDRIAL"/>
    <property type="match status" value="1"/>
</dbReference>
<dbReference type="PANTHER" id="PTHR42918">
    <property type="entry name" value="LYSYL-TRNA SYNTHETASE"/>
    <property type="match status" value="1"/>
</dbReference>
<dbReference type="Pfam" id="PF00152">
    <property type="entry name" value="tRNA-synt_2"/>
    <property type="match status" value="1"/>
</dbReference>
<dbReference type="Pfam" id="PF01336">
    <property type="entry name" value="tRNA_anti-codon"/>
    <property type="match status" value="1"/>
</dbReference>
<dbReference type="PRINTS" id="PR00982">
    <property type="entry name" value="TRNASYNTHLYS"/>
</dbReference>
<dbReference type="SUPFAM" id="SSF55681">
    <property type="entry name" value="Class II aaRS and biotin synthetases"/>
    <property type="match status" value="1"/>
</dbReference>
<dbReference type="SUPFAM" id="SSF50249">
    <property type="entry name" value="Nucleic acid-binding proteins"/>
    <property type="match status" value="1"/>
</dbReference>
<dbReference type="PROSITE" id="PS50862">
    <property type="entry name" value="AA_TRNA_LIGASE_II"/>
    <property type="match status" value="1"/>
</dbReference>
<protein>
    <recommendedName>
        <fullName evidence="1">Lysine--tRNA ligase</fullName>
        <ecNumber evidence="1">6.1.1.6</ecNumber>
    </recommendedName>
    <alternativeName>
        <fullName evidence="1">Lysyl-tRNA synthetase</fullName>
        <shortName evidence="1">LysRS</shortName>
    </alternativeName>
</protein>
<feature type="chain" id="PRO_1000012867" description="Lysine--tRNA ligase">
    <location>
        <begin position="1"/>
        <end position="511"/>
    </location>
</feature>
<feature type="region of interest" description="Disordered" evidence="2">
    <location>
        <begin position="1"/>
        <end position="20"/>
    </location>
</feature>
<feature type="binding site" evidence="1">
    <location>
        <position position="422"/>
    </location>
    <ligand>
        <name>Mg(2+)</name>
        <dbReference type="ChEBI" id="CHEBI:18420"/>
        <label>1</label>
    </ligand>
</feature>
<feature type="binding site" evidence="1">
    <location>
        <position position="429"/>
    </location>
    <ligand>
        <name>Mg(2+)</name>
        <dbReference type="ChEBI" id="CHEBI:18420"/>
        <label>1</label>
    </ligand>
</feature>
<feature type="binding site" evidence="1">
    <location>
        <position position="429"/>
    </location>
    <ligand>
        <name>Mg(2+)</name>
        <dbReference type="ChEBI" id="CHEBI:18420"/>
        <label>2</label>
    </ligand>
</feature>
<organism>
    <name type="scientific">Chlorobium chlorochromatii (strain CaD3)</name>
    <dbReference type="NCBI Taxonomy" id="340177"/>
    <lineage>
        <taxon>Bacteria</taxon>
        <taxon>Pseudomonadati</taxon>
        <taxon>Chlorobiota</taxon>
        <taxon>Chlorobiia</taxon>
        <taxon>Chlorobiales</taxon>
        <taxon>Chlorobiaceae</taxon>
        <taxon>Chlorobium/Pelodictyon group</taxon>
        <taxon>Chlorobium</taxon>
    </lineage>
</organism>
<name>SYK_CHLCH</name>
<gene>
    <name evidence="1" type="primary">lysS</name>
    <name type="ordered locus">Cag_1176</name>
</gene>
<sequence length="511" mass="58251">MQKNTSQPTNTNEQSNQPSLNDQIVRRIEERQHLIDSGINPYPCSFNVTHHSATILTEFQDEAKTPVAVAGRIMTIRKMGKASFFNVQDSAGRIQIYLKKDDVGEAAYNMFKLLDIGDIVGVTGYTFRTKTGEISIHAESLELLTKSLRPIPIAKEKEVDGEKVVFDAFSDKELRYRQRYVDLIVNPEVRETFIKRTAIVAAMRNFFARHGWLEVETPILQPIYGGAAARPFTTHHNALDMQLYLRIANELYLKRLIVGGFDGVFEFAKDFRNEGIDRFHNPEFTQVELYVAYKDYNWMMNLVEELIYTTAMEVNKSDTTTFLGHEISVKPPFRRLTISDAIAEYTDKDIRNKSEEELRNIAKELGLELDPKIGNGKIIDEIFGEFVEPKLIQPTFITDYPTEMSPLAKEHAAQPGIVERFELIVGGKEVCNSFSELNDPVIQRERLESQAKLRLRGDEEAMVVDEDFLRAIEYGMPPCAGLGVGIDRLVMLLTGQESIRDVIFFPHLKPE</sequence>
<comment type="catalytic activity">
    <reaction evidence="1">
        <text>tRNA(Lys) + L-lysine + ATP = L-lysyl-tRNA(Lys) + AMP + diphosphate</text>
        <dbReference type="Rhea" id="RHEA:20792"/>
        <dbReference type="Rhea" id="RHEA-COMP:9696"/>
        <dbReference type="Rhea" id="RHEA-COMP:9697"/>
        <dbReference type="ChEBI" id="CHEBI:30616"/>
        <dbReference type="ChEBI" id="CHEBI:32551"/>
        <dbReference type="ChEBI" id="CHEBI:33019"/>
        <dbReference type="ChEBI" id="CHEBI:78442"/>
        <dbReference type="ChEBI" id="CHEBI:78529"/>
        <dbReference type="ChEBI" id="CHEBI:456215"/>
        <dbReference type="EC" id="6.1.1.6"/>
    </reaction>
</comment>
<comment type="cofactor">
    <cofactor evidence="1">
        <name>Mg(2+)</name>
        <dbReference type="ChEBI" id="CHEBI:18420"/>
    </cofactor>
    <text evidence="1">Binds 3 Mg(2+) ions per subunit.</text>
</comment>
<comment type="subunit">
    <text evidence="1">Homodimer.</text>
</comment>
<comment type="subcellular location">
    <subcellularLocation>
        <location evidence="1">Cytoplasm</location>
    </subcellularLocation>
</comment>
<comment type="similarity">
    <text evidence="1">Belongs to the class-II aminoacyl-tRNA synthetase family.</text>
</comment>
<proteinExistence type="inferred from homology"/>
<evidence type="ECO:0000255" key="1">
    <source>
        <dbReference type="HAMAP-Rule" id="MF_00252"/>
    </source>
</evidence>
<evidence type="ECO:0000256" key="2">
    <source>
        <dbReference type="SAM" id="MobiDB-lite"/>
    </source>
</evidence>
<reference key="1">
    <citation type="submission" date="2005-08" db="EMBL/GenBank/DDBJ databases">
        <title>Complete sequence of Chlorobium chlorochromatii CaD3.</title>
        <authorList>
            <consortium name="US DOE Joint Genome Institute"/>
            <person name="Copeland A."/>
            <person name="Lucas S."/>
            <person name="Lapidus A."/>
            <person name="Barry K."/>
            <person name="Detter J.C."/>
            <person name="Glavina T."/>
            <person name="Hammon N."/>
            <person name="Israni S."/>
            <person name="Pitluck S."/>
            <person name="Bryant D."/>
            <person name="Schmutz J."/>
            <person name="Larimer F."/>
            <person name="Land M."/>
            <person name="Kyrpides N."/>
            <person name="Ivanova N."/>
            <person name="Richardson P."/>
        </authorList>
    </citation>
    <scope>NUCLEOTIDE SEQUENCE [LARGE SCALE GENOMIC DNA]</scope>
    <source>
        <strain>CaD3</strain>
    </source>
</reference>
<keyword id="KW-0030">Aminoacyl-tRNA synthetase</keyword>
<keyword id="KW-0067">ATP-binding</keyword>
<keyword id="KW-0963">Cytoplasm</keyword>
<keyword id="KW-0436">Ligase</keyword>
<keyword id="KW-0460">Magnesium</keyword>
<keyword id="KW-0479">Metal-binding</keyword>
<keyword id="KW-0547">Nucleotide-binding</keyword>
<keyword id="KW-0648">Protein biosynthesis</keyword>